<name>INSC_ECOLX</name>
<accession>P0C5W3</accession>
<accession>O07989</accession>
<accession>O08018</accession>
<accession>O08019</accession>
<accession>P19776</accession>
<accession>P76357</accession>
<accession>P77346</accession>
<accession>Q2MBI5</accession>
<accession>Q2MC65</accession>
<accession>Q79BJ2</accession>
<accession>Q9JMT0</accession>
<keyword id="KW-0233">DNA recombination</keyword>
<keyword id="KW-0238">DNA-binding</keyword>
<keyword id="KW-0814">Transposable element</keyword>
<keyword id="KW-0815">Transposition</keyword>
<evidence type="ECO:0000250" key="1"/>
<evidence type="ECO:0000305" key="2"/>
<sequence>MIDVLGPEKRRRRTTQEKIAIVQQSFEPGMTVSLVARQHGVAASQLFLWRKQYQEGSLTAVAAGEQVVPASELAAAMKQIKELQRLLGKKTMENELLKEAVEYGRAKKWIAHAPLLPGDGE</sequence>
<reference key="1">
    <citation type="journal article" date="1987" name="Gene">
        <title>Genetic organization of insertion element IS2 based on a revised nucleotide sequence.</title>
        <authorList>
            <person name="Ronecker H.J."/>
            <person name="Rak B."/>
        </authorList>
    </citation>
    <scope>NUCLEOTIDE SEQUENCE [GENOMIC DNA]</scope>
    <source>
        <strain>ATCC 33694 / HB101</strain>
    </source>
</reference>
<dbReference type="EMBL" id="V00279">
    <property type="protein sequence ID" value="CAA23542.1"/>
    <property type="molecule type" value="Genomic_DNA"/>
</dbReference>
<dbReference type="PIR" id="B65240">
    <property type="entry name" value="B65240"/>
</dbReference>
<dbReference type="RefSeq" id="WP_000567766.1">
    <property type="nucleotide sequence ID" value="NZ_WTNO01000027.1"/>
</dbReference>
<dbReference type="RefSeq" id="YP_003162538.1">
    <property type="nucleotide sequence ID" value="NC_013175.1"/>
</dbReference>
<dbReference type="RefSeq" id="YP_006903603.1">
    <property type="nucleotide sequence ID" value="NC_019043.1"/>
</dbReference>
<dbReference type="RefSeq" id="YP_008826416.1">
    <property type="nucleotide sequence ID" value="NC_022885.1"/>
</dbReference>
<dbReference type="RefSeq" id="YP_008995244.1">
    <property type="nucleotide sequence ID" value="NC_023277.2"/>
</dbReference>
<dbReference type="RefSeq" id="YP_009070847.1">
    <property type="nucleotide sequence ID" value="NC_025176.1"/>
</dbReference>
<dbReference type="RefSeq" id="YP_009071124.1">
    <property type="nucleotide sequence ID" value="NC_025179.1"/>
</dbReference>
<dbReference type="RefSeq" id="YP_009071187.1">
    <property type="nucleotide sequence ID" value="NC_025179.1"/>
</dbReference>
<dbReference type="RefSeq" id="YP_444021.2">
    <property type="nucleotide sequence ID" value="NC_007675.1"/>
</dbReference>
<dbReference type="RefSeq" id="YP_444099.2">
    <property type="nucleotide sequence ID" value="NC_007675.1"/>
</dbReference>
<dbReference type="SMR" id="P0C5W3"/>
<dbReference type="GO" id="GO:0003677">
    <property type="term" value="F:DNA binding"/>
    <property type="evidence" value="ECO:0007669"/>
    <property type="project" value="UniProtKB-KW"/>
</dbReference>
<dbReference type="GO" id="GO:0004803">
    <property type="term" value="F:transposase activity"/>
    <property type="evidence" value="ECO:0007669"/>
    <property type="project" value="InterPro"/>
</dbReference>
<dbReference type="GO" id="GO:0006313">
    <property type="term" value="P:DNA transposition"/>
    <property type="evidence" value="ECO:0007669"/>
    <property type="project" value="InterPro"/>
</dbReference>
<dbReference type="Gene3D" id="1.10.10.10">
    <property type="entry name" value="Winged helix-like DNA-binding domain superfamily/Winged helix DNA-binding domain"/>
    <property type="match status" value="1"/>
</dbReference>
<dbReference type="InterPro" id="IPR009057">
    <property type="entry name" value="Homeodomain-like_sf"/>
</dbReference>
<dbReference type="InterPro" id="IPR002514">
    <property type="entry name" value="Transposase_8"/>
</dbReference>
<dbReference type="InterPro" id="IPR036388">
    <property type="entry name" value="WH-like_DNA-bd_sf"/>
</dbReference>
<dbReference type="NCBIfam" id="NF006928">
    <property type="entry name" value="PRK09413.1"/>
    <property type="match status" value="1"/>
</dbReference>
<dbReference type="PANTHER" id="PTHR37936">
    <property type="entry name" value="TRANSPOSASE INSC FOR INSERTION ELEMENT IS2A-RELATED"/>
    <property type="match status" value="1"/>
</dbReference>
<dbReference type="PANTHER" id="PTHR37936:SF3">
    <property type="entry name" value="TRANSPOSASE INSC FOR INSERTION ELEMENT IS2A-RELATED"/>
    <property type="match status" value="1"/>
</dbReference>
<dbReference type="Pfam" id="PF01527">
    <property type="entry name" value="HTH_Tnp_1"/>
    <property type="match status" value="1"/>
</dbReference>
<dbReference type="SUPFAM" id="SSF46689">
    <property type="entry name" value="Homeodomain-like"/>
    <property type="match status" value="1"/>
</dbReference>
<protein>
    <recommendedName>
        <fullName>Transposase InsC for insertion element IS2A/D/F/H/I/K</fullName>
    </recommendedName>
</protein>
<proteinExistence type="inferred from homology"/>
<organism>
    <name type="scientific">Escherichia coli</name>
    <dbReference type="NCBI Taxonomy" id="562"/>
    <lineage>
        <taxon>Bacteria</taxon>
        <taxon>Pseudomonadati</taxon>
        <taxon>Pseudomonadota</taxon>
        <taxon>Gammaproteobacteria</taxon>
        <taxon>Enterobacterales</taxon>
        <taxon>Enterobacteriaceae</taxon>
        <taxon>Escherichia</taxon>
    </lineage>
</organism>
<gene>
    <name type="primary">insC</name>
</gene>
<feature type="chain" id="PRO_0000311587" description="Transposase InsC for insertion element IS2A/D/F/H/I/K">
    <location>
        <begin position="1"/>
        <end position="121"/>
    </location>
</feature>
<comment type="function">
    <text evidence="1">Involved in the transposition of the insertion sequence IS2.</text>
</comment>
<comment type="similarity">
    <text evidence="2">Belongs to the transposase 8 family.</text>
</comment>